<gene>
    <name type="ORF">SPCC965.10</name>
</gene>
<reference key="1">
    <citation type="journal article" date="2002" name="Nature">
        <title>The genome sequence of Schizosaccharomyces pombe.</title>
        <authorList>
            <person name="Wood V."/>
            <person name="Gwilliam R."/>
            <person name="Rajandream M.A."/>
            <person name="Lyne M.H."/>
            <person name="Lyne R."/>
            <person name="Stewart A."/>
            <person name="Sgouros J.G."/>
            <person name="Peat N."/>
            <person name="Hayles J."/>
            <person name="Baker S.G."/>
            <person name="Basham D."/>
            <person name="Bowman S."/>
            <person name="Brooks K."/>
            <person name="Brown D."/>
            <person name="Brown S."/>
            <person name="Chillingworth T."/>
            <person name="Churcher C.M."/>
            <person name="Collins M."/>
            <person name="Connor R."/>
            <person name="Cronin A."/>
            <person name="Davis P."/>
            <person name="Feltwell T."/>
            <person name="Fraser A."/>
            <person name="Gentles S."/>
            <person name="Goble A."/>
            <person name="Hamlin N."/>
            <person name="Harris D.E."/>
            <person name="Hidalgo J."/>
            <person name="Hodgson G."/>
            <person name="Holroyd S."/>
            <person name="Hornsby T."/>
            <person name="Howarth S."/>
            <person name="Huckle E.J."/>
            <person name="Hunt S."/>
            <person name="Jagels K."/>
            <person name="James K.D."/>
            <person name="Jones L."/>
            <person name="Jones M."/>
            <person name="Leather S."/>
            <person name="McDonald S."/>
            <person name="McLean J."/>
            <person name="Mooney P."/>
            <person name="Moule S."/>
            <person name="Mungall K.L."/>
            <person name="Murphy L.D."/>
            <person name="Niblett D."/>
            <person name="Odell C."/>
            <person name="Oliver K."/>
            <person name="O'Neil S."/>
            <person name="Pearson D."/>
            <person name="Quail M.A."/>
            <person name="Rabbinowitsch E."/>
            <person name="Rutherford K.M."/>
            <person name="Rutter S."/>
            <person name="Saunders D."/>
            <person name="Seeger K."/>
            <person name="Sharp S."/>
            <person name="Skelton J."/>
            <person name="Simmonds M.N."/>
            <person name="Squares R."/>
            <person name="Squares S."/>
            <person name="Stevens K."/>
            <person name="Taylor K."/>
            <person name="Taylor R.G."/>
            <person name="Tivey A."/>
            <person name="Walsh S.V."/>
            <person name="Warren T."/>
            <person name="Whitehead S."/>
            <person name="Woodward J.R."/>
            <person name="Volckaert G."/>
            <person name="Aert R."/>
            <person name="Robben J."/>
            <person name="Grymonprez B."/>
            <person name="Weltjens I."/>
            <person name="Vanstreels E."/>
            <person name="Rieger M."/>
            <person name="Schaefer M."/>
            <person name="Mueller-Auer S."/>
            <person name="Gabel C."/>
            <person name="Fuchs M."/>
            <person name="Duesterhoeft A."/>
            <person name="Fritzc C."/>
            <person name="Holzer E."/>
            <person name="Moestl D."/>
            <person name="Hilbert H."/>
            <person name="Borzym K."/>
            <person name="Langer I."/>
            <person name="Beck A."/>
            <person name="Lehrach H."/>
            <person name="Reinhardt R."/>
            <person name="Pohl T.M."/>
            <person name="Eger P."/>
            <person name="Zimmermann W."/>
            <person name="Wedler H."/>
            <person name="Wambutt R."/>
            <person name="Purnelle B."/>
            <person name="Goffeau A."/>
            <person name="Cadieu E."/>
            <person name="Dreano S."/>
            <person name="Gloux S."/>
            <person name="Lelaure V."/>
            <person name="Mottier S."/>
            <person name="Galibert F."/>
            <person name="Aves S.J."/>
            <person name="Xiang Z."/>
            <person name="Hunt C."/>
            <person name="Moore K."/>
            <person name="Hurst S.M."/>
            <person name="Lucas M."/>
            <person name="Rochet M."/>
            <person name="Gaillardin C."/>
            <person name="Tallada V.A."/>
            <person name="Garzon A."/>
            <person name="Thode G."/>
            <person name="Daga R.R."/>
            <person name="Cruzado L."/>
            <person name="Jimenez J."/>
            <person name="Sanchez M."/>
            <person name="del Rey F."/>
            <person name="Benito J."/>
            <person name="Dominguez A."/>
            <person name="Revuelta J.L."/>
            <person name="Moreno S."/>
            <person name="Armstrong J."/>
            <person name="Forsburg S.L."/>
            <person name="Cerutti L."/>
            <person name="Lowe T."/>
            <person name="McCombie W.R."/>
            <person name="Paulsen I."/>
            <person name="Potashkin J."/>
            <person name="Shpakovski G.V."/>
            <person name="Ussery D."/>
            <person name="Barrell B.G."/>
            <person name="Nurse P."/>
        </authorList>
    </citation>
    <scope>NUCLEOTIDE SEQUENCE [LARGE SCALE GENOMIC DNA]</scope>
    <source>
        <strain>972 / ATCC 24843</strain>
    </source>
</reference>
<reference key="2">
    <citation type="journal article" date="2006" name="Nat. Biotechnol.">
        <title>ORFeome cloning and global analysis of protein localization in the fission yeast Schizosaccharomyces pombe.</title>
        <authorList>
            <person name="Matsuyama A."/>
            <person name="Arai R."/>
            <person name="Yashiroda Y."/>
            <person name="Shirai A."/>
            <person name="Kamata A."/>
            <person name="Sekido S."/>
            <person name="Kobayashi Y."/>
            <person name="Hashimoto A."/>
            <person name="Hamamoto M."/>
            <person name="Hiraoka Y."/>
            <person name="Horinouchi S."/>
            <person name="Yoshida M."/>
        </authorList>
    </citation>
    <scope>SUBCELLULAR LOCATION [LARGE SCALE ANALYSIS]</scope>
</reference>
<organism>
    <name type="scientific">Schizosaccharomyces pombe (strain 972 / ATCC 24843)</name>
    <name type="common">Fission yeast</name>
    <dbReference type="NCBI Taxonomy" id="284812"/>
    <lineage>
        <taxon>Eukaryota</taxon>
        <taxon>Fungi</taxon>
        <taxon>Dikarya</taxon>
        <taxon>Ascomycota</taxon>
        <taxon>Taphrinomycotina</taxon>
        <taxon>Schizosaccharomycetes</taxon>
        <taxon>Schizosaccharomycetales</taxon>
        <taxon>Schizosaccharomycetaceae</taxon>
        <taxon>Schizosaccharomyces</taxon>
    </lineage>
</organism>
<name>YCUA_SCHPO</name>
<sequence>MTSTSHFVASTVKKPRSRYGCLICRSMRKKCDEVHPQCGRCLKAGKQCIWKQPGTERKNKTKWRKAMQNNSIPIQDLADDFELDFPDTLDLTNPDALPVLGESIVNPISLPVDVASPFLPSECYPSKVELPYFPLLSKPNTLLSLLNDEEISCCEYYCYSVAPITTILPGQPNFLPQLLLPMALHEESVLYSLVASGYRLKYGNDNSLALQKSKVFVNRALLTLPERRSLNLSKSEFVVSLACYILLVYTEIAFADTTEWATYFLNAYNMINKMGGFKILKECSSEGKLLAECFAYFDILASQSNLNGTYYSISDYTDVYGVDELQLFESLENCIKPLVLIIGDIINLLVESRRAGFDDLQHTLNIYEKSQTIEGKIWSCVPQYEDMKSNKLDSEKSEPLQLFKLYKTTTEMYLRQVISRMPPVSLEMQVLLHKQTQLIDLLLESSLRNSLSFPMLIAGLNAATDLQRTNFKNRVNCLCQNYTIGSLKKVWIVVQEIWKMNQNGNICIDWYEVVQKFGWRLNTGV</sequence>
<feature type="chain" id="PRO_0000310378" description="Uncharacterized transcriptional regulatory protein C965.10">
    <location>
        <begin position="1"/>
        <end position="525"/>
    </location>
</feature>
<feature type="DNA-binding region" description="Zn(2)-C6 fungal-type" evidence="1">
    <location>
        <begin position="21"/>
        <end position="48"/>
    </location>
</feature>
<proteinExistence type="inferred from homology"/>
<keyword id="KW-0963">Cytoplasm</keyword>
<keyword id="KW-0238">DNA-binding</keyword>
<keyword id="KW-0479">Metal-binding</keyword>
<keyword id="KW-0539">Nucleus</keyword>
<keyword id="KW-1185">Reference proteome</keyword>
<keyword id="KW-0804">Transcription</keyword>
<keyword id="KW-0805">Transcription regulation</keyword>
<keyword id="KW-0862">Zinc</keyword>
<comment type="subcellular location">
    <subcellularLocation>
        <location evidence="2">Cytoplasm</location>
    </subcellularLocation>
    <subcellularLocation>
        <location evidence="1 2">Nucleus</location>
    </subcellularLocation>
</comment>
<protein>
    <recommendedName>
        <fullName>Uncharacterized transcriptional regulatory protein C965.10</fullName>
    </recommendedName>
</protein>
<accession>O59830</accession>
<dbReference type="EMBL" id="CU329672">
    <property type="protein sequence ID" value="CAA19070.1"/>
    <property type="molecule type" value="Genomic_DNA"/>
</dbReference>
<dbReference type="PIR" id="T41663">
    <property type="entry name" value="T41663"/>
</dbReference>
<dbReference type="RefSeq" id="NP_588520.1">
    <property type="nucleotide sequence ID" value="NM_001023509.2"/>
</dbReference>
<dbReference type="SMR" id="O59830"/>
<dbReference type="BioGRID" id="275963">
    <property type="interactions" value="3"/>
</dbReference>
<dbReference type="FunCoup" id="O59830">
    <property type="interactions" value="271"/>
</dbReference>
<dbReference type="STRING" id="284812.O59830"/>
<dbReference type="iPTMnet" id="O59830"/>
<dbReference type="PaxDb" id="4896-SPCC965.10.1"/>
<dbReference type="EnsemblFungi" id="SPCC965.10.1">
    <property type="protein sequence ID" value="SPCC965.10.1:pep"/>
    <property type="gene ID" value="SPCC965.10"/>
</dbReference>
<dbReference type="KEGG" id="spo:2539398"/>
<dbReference type="PomBase" id="SPCC965.10"/>
<dbReference type="VEuPathDB" id="FungiDB:SPCC965.10"/>
<dbReference type="eggNOG" id="ENOG502RIXM">
    <property type="taxonomic scope" value="Eukaryota"/>
</dbReference>
<dbReference type="HOGENOM" id="CLU_500636_0_0_1"/>
<dbReference type="InParanoid" id="O59830"/>
<dbReference type="OMA" id="FQGCIQP"/>
<dbReference type="PhylomeDB" id="O59830"/>
<dbReference type="PRO" id="PR:O59830"/>
<dbReference type="Proteomes" id="UP000002485">
    <property type="component" value="Chromosome III"/>
</dbReference>
<dbReference type="GO" id="GO:0005829">
    <property type="term" value="C:cytosol"/>
    <property type="evidence" value="ECO:0007005"/>
    <property type="project" value="PomBase"/>
</dbReference>
<dbReference type="GO" id="GO:0005634">
    <property type="term" value="C:nucleus"/>
    <property type="evidence" value="ECO:0007005"/>
    <property type="project" value="PomBase"/>
</dbReference>
<dbReference type="GO" id="GO:0003700">
    <property type="term" value="F:DNA-binding transcription factor activity"/>
    <property type="evidence" value="ECO:0000318"/>
    <property type="project" value="GO_Central"/>
</dbReference>
<dbReference type="GO" id="GO:0000981">
    <property type="term" value="F:DNA-binding transcription factor activity, RNA polymerase II-specific"/>
    <property type="evidence" value="ECO:0000255"/>
    <property type="project" value="PomBase"/>
</dbReference>
<dbReference type="GO" id="GO:0000978">
    <property type="term" value="F:RNA polymerase II cis-regulatory region sequence-specific DNA binding"/>
    <property type="evidence" value="ECO:0000255"/>
    <property type="project" value="PomBase"/>
</dbReference>
<dbReference type="GO" id="GO:0000976">
    <property type="term" value="F:transcription cis-regulatory region binding"/>
    <property type="evidence" value="ECO:0000318"/>
    <property type="project" value="GO_Central"/>
</dbReference>
<dbReference type="GO" id="GO:0008270">
    <property type="term" value="F:zinc ion binding"/>
    <property type="evidence" value="ECO:0000255"/>
    <property type="project" value="PomBase"/>
</dbReference>
<dbReference type="GO" id="GO:0045944">
    <property type="term" value="P:positive regulation of transcription by RNA polymerase II"/>
    <property type="evidence" value="ECO:0000318"/>
    <property type="project" value="GO_Central"/>
</dbReference>
<dbReference type="CDD" id="cd00067">
    <property type="entry name" value="GAL4"/>
    <property type="match status" value="1"/>
</dbReference>
<dbReference type="FunFam" id="4.10.240.10:FF:000085">
    <property type="entry name" value="Zinc cluster transcription factor CZF1"/>
    <property type="match status" value="1"/>
</dbReference>
<dbReference type="Gene3D" id="4.10.240.10">
    <property type="entry name" value="Zn(2)-C6 fungal-type DNA-binding domain"/>
    <property type="match status" value="1"/>
</dbReference>
<dbReference type="InterPro" id="IPR021858">
    <property type="entry name" value="Fun_TF"/>
</dbReference>
<dbReference type="InterPro" id="IPR036864">
    <property type="entry name" value="Zn2-C6_fun-type_DNA-bd_sf"/>
</dbReference>
<dbReference type="InterPro" id="IPR001138">
    <property type="entry name" value="Zn2Cys6_DnaBD"/>
</dbReference>
<dbReference type="PANTHER" id="PTHR37534">
    <property type="entry name" value="TRANSCRIPTIONAL ACTIVATOR PROTEIN UGA3"/>
    <property type="match status" value="1"/>
</dbReference>
<dbReference type="PANTHER" id="PTHR37534:SF7">
    <property type="entry name" value="TRANSCRIPTIONAL ACTIVATOR PROTEIN UGA3"/>
    <property type="match status" value="1"/>
</dbReference>
<dbReference type="Pfam" id="PF11951">
    <property type="entry name" value="Fungal_trans_2"/>
    <property type="match status" value="1"/>
</dbReference>
<dbReference type="Pfam" id="PF00172">
    <property type="entry name" value="Zn_clus"/>
    <property type="match status" value="1"/>
</dbReference>
<dbReference type="SMART" id="SM00066">
    <property type="entry name" value="GAL4"/>
    <property type="match status" value="1"/>
</dbReference>
<dbReference type="SUPFAM" id="SSF57701">
    <property type="entry name" value="Zn2/Cys6 DNA-binding domain"/>
    <property type="match status" value="1"/>
</dbReference>
<dbReference type="PROSITE" id="PS00463">
    <property type="entry name" value="ZN2_CY6_FUNGAL_1"/>
    <property type="match status" value="1"/>
</dbReference>
<dbReference type="PROSITE" id="PS50048">
    <property type="entry name" value="ZN2_CY6_FUNGAL_2"/>
    <property type="match status" value="1"/>
</dbReference>
<evidence type="ECO:0000255" key="1">
    <source>
        <dbReference type="PROSITE-ProRule" id="PRU00227"/>
    </source>
</evidence>
<evidence type="ECO:0000269" key="2">
    <source>
    </source>
</evidence>